<dbReference type="EMBL" id="CP000941">
    <property type="protein sequence ID" value="ACA11234.1"/>
    <property type="status" value="ALT_INIT"/>
    <property type="molecule type" value="Genomic_DNA"/>
</dbReference>
<dbReference type="RefSeq" id="WP_021358323.1">
    <property type="nucleotide sequence ID" value="NC_010513.1"/>
</dbReference>
<dbReference type="SMR" id="B0U1Q6"/>
<dbReference type="KEGG" id="xfm:Xfasm12_0201"/>
<dbReference type="HOGENOM" id="CLU_070525_1_1_6"/>
<dbReference type="GO" id="GO:0005829">
    <property type="term" value="C:cytosol"/>
    <property type="evidence" value="ECO:0007669"/>
    <property type="project" value="TreeGrafter"/>
</dbReference>
<dbReference type="GO" id="GO:0000028">
    <property type="term" value="P:ribosomal small subunit assembly"/>
    <property type="evidence" value="ECO:0007669"/>
    <property type="project" value="TreeGrafter"/>
</dbReference>
<dbReference type="GO" id="GO:0006412">
    <property type="term" value="P:translation"/>
    <property type="evidence" value="ECO:0007669"/>
    <property type="project" value="TreeGrafter"/>
</dbReference>
<dbReference type="CDD" id="cd01734">
    <property type="entry name" value="YlxS_C"/>
    <property type="match status" value="1"/>
</dbReference>
<dbReference type="FunFam" id="3.30.300.70:FF:000001">
    <property type="entry name" value="Ribosome maturation factor RimP"/>
    <property type="match status" value="1"/>
</dbReference>
<dbReference type="Gene3D" id="3.30.300.70">
    <property type="entry name" value="RimP-like superfamily, N-terminal"/>
    <property type="match status" value="1"/>
</dbReference>
<dbReference type="HAMAP" id="MF_01077">
    <property type="entry name" value="RimP"/>
    <property type="match status" value="1"/>
</dbReference>
<dbReference type="InterPro" id="IPR003728">
    <property type="entry name" value="Ribosome_maturation_RimP"/>
</dbReference>
<dbReference type="InterPro" id="IPR028998">
    <property type="entry name" value="RimP_C"/>
</dbReference>
<dbReference type="InterPro" id="IPR036847">
    <property type="entry name" value="RimP_C_sf"/>
</dbReference>
<dbReference type="InterPro" id="IPR028989">
    <property type="entry name" value="RimP_N"/>
</dbReference>
<dbReference type="InterPro" id="IPR035956">
    <property type="entry name" value="RimP_N_sf"/>
</dbReference>
<dbReference type="NCBIfam" id="NF000931">
    <property type="entry name" value="PRK00092.2-3"/>
    <property type="match status" value="1"/>
</dbReference>
<dbReference type="PANTHER" id="PTHR33867">
    <property type="entry name" value="RIBOSOME MATURATION FACTOR RIMP"/>
    <property type="match status" value="1"/>
</dbReference>
<dbReference type="PANTHER" id="PTHR33867:SF1">
    <property type="entry name" value="RIBOSOME MATURATION FACTOR RIMP"/>
    <property type="match status" value="1"/>
</dbReference>
<dbReference type="Pfam" id="PF17384">
    <property type="entry name" value="DUF150_C"/>
    <property type="match status" value="1"/>
</dbReference>
<dbReference type="Pfam" id="PF02576">
    <property type="entry name" value="RimP_N"/>
    <property type="match status" value="1"/>
</dbReference>
<dbReference type="SUPFAM" id="SSF74942">
    <property type="entry name" value="YhbC-like, C-terminal domain"/>
    <property type="match status" value="1"/>
</dbReference>
<dbReference type="SUPFAM" id="SSF75420">
    <property type="entry name" value="YhbC-like, N-terminal domain"/>
    <property type="match status" value="1"/>
</dbReference>
<keyword id="KW-0963">Cytoplasm</keyword>
<keyword id="KW-0690">Ribosome biogenesis</keyword>
<evidence type="ECO:0000255" key="1">
    <source>
        <dbReference type="HAMAP-Rule" id="MF_01077"/>
    </source>
</evidence>
<evidence type="ECO:0000256" key="2">
    <source>
        <dbReference type="SAM" id="MobiDB-lite"/>
    </source>
</evidence>
<evidence type="ECO:0000305" key="3"/>
<comment type="function">
    <text evidence="1">Required for maturation of 30S ribosomal subunits.</text>
</comment>
<comment type="subcellular location">
    <subcellularLocation>
        <location evidence="1">Cytoplasm</location>
    </subcellularLocation>
</comment>
<comment type="similarity">
    <text evidence="1">Belongs to the RimP family.</text>
</comment>
<comment type="sequence caution" evidence="3">
    <conflict type="erroneous initiation">
        <sequence resource="EMBL-CDS" id="ACA11234"/>
    </conflict>
</comment>
<protein>
    <recommendedName>
        <fullName evidence="1">Ribosome maturation factor RimP</fullName>
    </recommendedName>
</protein>
<feature type="chain" id="PRO_1000136807" description="Ribosome maturation factor RimP">
    <location>
        <begin position="1"/>
        <end position="199"/>
    </location>
</feature>
<feature type="region of interest" description="Disordered" evidence="2">
    <location>
        <begin position="170"/>
        <end position="199"/>
    </location>
</feature>
<feature type="compositionally biased region" description="Polar residues" evidence="2">
    <location>
        <begin position="177"/>
        <end position="189"/>
    </location>
</feature>
<gene>
    <name evidence="1" type="primary">rimP</name>
    <name type="ordered locus">Xfasm12_0201</name>
</gene>
<reference key="1">
    <citation type="journal article" date="2010" name="J. Bacteriol.">
        <title>Whole genome sequences of two Xylella fastidiosa strains (M12 and M23) causing almond leaf scorch disease in California.</title>
        <authorList>
            <person name="Chen J."/>
            <person name="Xie G."/>
            <person name="Han S."/>
            <person name="Chertkov O."/>
            <person name="Sims D."/>
            <person name="Civerolo E.L."/>
        </authorList>
    </citation>
    <scope>NUCLEOTIDE SEQUENCE [LARGE SCALE GENOMIC DNA]</scope>
    <source>
        <strain>M12</strain>
    </source>
</reference>
<organism>
    <name type="scientific">Xylella fastidiosa (strain M12)</name>
    <dbReference type="NCBI Taxonomy" id="405440"/>
    <lineage>
        <taxon>Bacteria</taxon>
        <taxon>Pseudomonadati</taxon>
        <taxon>Pseudomonadota</taxon>
        <taxon>Gammaproteobacteria</taxon>
        <taxon>Lysobacterales</taxon>
        <taxon>Lysobacteraceae</taxon>
        <taxon>Xylella</taxon>
    </lineage>
</organism>
<sequence>MSDKGIEIVNLLAPKVEMLGFDLLGAEYVLVPSGAILRLYIDIPFAMQPECMVSIDDCERVSREVSAYLDLEEPISGNYTLEVSSPGLDRRLFTLEQFARHHNHLVKVGLKLQQHGSRRLQGKIVRVEQVGGFVVLLVNGVELAVDFNNIDKARIVPDWSALGLAPLEKSKHDTKKMSQGNKKPSNESAARQAVRGVIR</sequence>
<proteinExistence type="inferred from homology"/>
<accession>B0U1Q6</accession>
<name>RIMP_XYLFM</name>